<accession>O43076</accession>
<accession>O13645</accession>
<dbReference type="EMBL" id="AB004538">
    <property type="protein sequence ID" value="BAA21433.1"/>
    <property type="status" value="ALT_SEQ"/>
    <property type="molecule type" value="Genomic_DNA"/>
</dbReference>
<dbReference type="EMBL" id="CU329671">
    <property type="protein sequence ID" value="CAA17828.1"/>
    <property type="molecule type" value="Genomic_DNA"/>
</dbReference>
<dbReference type="PIR" id="T40758">
    <property type="entry name" value="T40758"/>
</dbReference>
<dbReference type="RefSeq" id="NP_595575.1">
    <property type="nucleotide sequence ID" value="NM_001021470.2"/>
</dbReference>
<dbReference type="SMR" id="O43076"/>
<dbReference type="FunCoup" id="O43076">
    <property type="interactions" value="725"/>
</dbReference>
<dbReference type="STRING" id="284812.O43076"/>
<dbReference type="iPTMnet" id="O43076"/>
<dbReference type="PaxDb" id="4896-SPBC8D2.13.1"/>
<dbReference type="EnsemblFungi" id="SPBC8D2.13.1">
    <property type="protein sequence ID" value="SPBC8D2.13.1:pep"/>
    <property type="gene ID" value="SPBC8D2.13"/>
</dbReference>
<dbReference type="GeneID" id="2541267"/>
<dbReference type="KEGG" id="spo:2541267"/>
<dbReference type="PomBase" id="SPBC8D2.13">
    <property type="gene designation" value="shq1"/>
</dbReference>
<dbReference type="VEuPathDB" id="FungiDB:SPBC8D2.13"/>
<dbReference type="eggNOG" id="KOG3247">
    <property type="taxonomic scope" value="Eukaryota"/>
</dbReference>
<dbReference type="HOGENOM" id="CLU_030217_0_0_1"/>
<dbReference type="InParanoid" id="O43076"/>
<dbReference type="OMA" id="HNIESAW"/>
<dbReference type="PhylomeDB" id="O43076"/>
<dbReference type="Reactome" id="R-SPO-171319">
    <property type="pathway name" value="Telomere Extension By Telomerase"/>
</dbReference>
<dbReference type="PRO" id="PR:O43076"/>
<dbReference type="Proteomes" id="UP000002485">
    <property type="component" value="Chromosome II"/>
</dbReference>
<dbReference type="GO" id="GO:0005737">
    <property type="term" value="C:cytoplasm"/>
    <property type="evidence" value="ECO:0000318"/>
    <property type="project" value="GO_Central"/>
</dbReference>
<dbReference type="GO" id="GO:0005829">
    <property type="term" value="C:cytosol"/>
    <property type="evidence" value="ECO:0007005"/>
    <property type="project" value="PomBase"/>
</dbReference>
<dbReference type="GO" id="GO:0005730">
    <property type="term" value="C:nucleolus"/>
    <property type="evidence" value="ECO:0000250"/>
    <property type="project" value="PomBase"/>
</dbReference>
<dbReference type="GO" id="GO:0005654">
    <property type="term" value="C:nucleoplasm"/>
    <property type="evidence" value="ECO:0000318"/>
    <property type="project" value="GO_Central"/>
</dbReference>
<dbReference type="GO" id="GO:0005634">
    <property type="term" value="C:nucleus"/>
    <property type="evidence" value="ECO:0007005"/>
    <property type="project" value="PomBase"/>
</dbReference>
<dbReference type="GO" id="GO:0051082">
    <property type="term" value="F:unfolded protein binding"/>
    <property type="evidence" value="ECO:0000318"/>
    <property type="project" value="GO_Central"/>
</dbReference>
<dbReference type="GO" id="GO:0000493">
    <property type="term" value="P:box H/ACA snoRNP assembly"/>
    <property type="evidence" value="ECO:0000318"/>
    <property type="project" value="GO_Central"/>
</dbReference>
<dbReference type="GO" id="GO:0006364">
    <property type="term" value="P:rRNA processing"/>
    <property type="evidence" value="ECO:0000305"/>
    <property type="project" value="PomBase"/>
</dbReference>
<dbReference type="CDD" id="cd06463">
    <property type="entry name" value="p23_like"/>
    <property type="match status" value="1"/>
</dbReference>
<dbReference type="Gene3D" id="2.60.40.790">
    <property type="match status" value="1"/>
</dbReference>
<dbReference type="InterPro" id="IPR007052">
    <property type="entry name" value="CS_dom"/>
</dbReference>
<dbReference type="InterPro" id="IPR008978">
    <property type="entry name" value="HSP20-like_chaperone"/>
</dbReference>
<dbReference type="InterPro" id="IPR039742">
    <property type="entry name" value="Shq1"/>
</dbReference>
<dbReference type="InterPro" id="IPR048696">
    <property type="entry name" value="SHQ1-like_CS"/>
</dbReference>
<dbReference type="InterPro" id="IPR007009">
    <property type="entry name" value="Shq1_C"/>
</dbReference>
<dbReference type="PANTHER" id="PTHR12967">
    <property type="entry name" value="PROTEIN SHQ1 HOMOLOG"/>
    <property type="match status" value="1"/>
</dbReference>
<dbReference type="PANTHER" id="PTHR12967:SF0">
    <property type="entry name" value="PROTEIN SHQ1 HOMOLOG"/>
    <property type="match status" value="1"/>
</dbReference>
<dbReference type="Pfam" id="PF04925">
    <property type="entry name" value="SHQ1"/>
    <property type="match status" value="1"/>
</dbReference>
<dbReference type="Pfam" id="PF21413">
    <property type="entry name" value="SHQ1-like_CS"/>
    <property type="match status" value="1"/>
</dbReference>
<dbReference type="SUPFAM" id="SSF49764">
    <property type="entry name" value="HSP20-like chaperones"/>
    <property type="match status" value="1"/>
</dbReference>
<dbReference type="PROSITE" id="PS51203">
    <property type="entry name" value="CS"/>
    <property type="match status" value="1"/>
</dbReference>
<reference key="1">
    <citation type="journal article" date="2000" name="Yeast">
        <title>A 38 kb segment containing the cdc2 gene from the left arm of fission yeast chromosome II: sequence analysis and characterization of the genomic DNA and cDNAs encoded on the segment.</title>
        <authorList>
            <person name="Machida M."/>
            <person name="Yamazaki S."/>
            <person name="Kunihiro S."/>
            <person name="Tanaka T."/>
            <person name="Kushida N."/>
            <person name="Jinno K."/>
            <person name="Haikawa Y."/>
            <person name="Yamazaki J."/>
            <person name="Yamamoto S."/>
            <person name="Sekine M."/>
            <person name="Oguchi A."/>
            <person name="Nagai Y."/>
            <person name="Sakai M."/>
            <person name="Aoki K."/>
            <person name="Ogura K."/>
            <person name="Kudoh Y."/>
            <person name="Kikuchi H."/>
            <person name="Zhang M.Q."/>
            <person name="Yanagida M."/>
        </authorList>
    </citation>
    <scope>NUCLEOTIDE SEQUENCE [LARGE SCALE GENOMIC DNA]</scope>
    <source>
        <strain>972 / ATCC 24843</strain>
    </source>
</reference>
<reference key="2">
    <citation type="journal article" date="2002" name="Nature">
        <title>The genome sequence of Schizosaccharomyces pombe.</title>
        <authorList>
            <person name="Wood V."/>
            <person name="Gwilliam R."/>
            <person name="Rajandream M.A."/>
            <person name="Lyne M.H."/>
            <person name="Lyne R."/>
            <person name="Stewart A."/>
            <person name="Sgouros J.G."/>
            <person name="Peat N."/>
            <person name="Hayles J."/>
            <person name="Baker S.G."/>
            <person name="Basham D."/>
            <person name="Bowman S."/>
            <person name="Brooks K."/>
            <person name="Brown D."/>
            <person name="Brown S."/>
            <person name="Chillingworth T."/>
            <person name="Churcher C.M."/>
            <person name="Collins M."/>
            <person name="Connor R."/>
            <person name="Cronin A."/>
            <person name="Davis P."/>
            <person name="Feltwell T."/>
            <person name="Fraser A."/>
            <person name="Gentles S."/>
            <person name="Goble A."/>
            <person name="Hamlin N."/>
            <person name="Harris D.E."/>
            <person name="Hidalgo J."/>
            <person name="Hodgson G."/>
            <person name="Holroyd S."/>
            <person name="Hornsby T."/>
            <person name="Howarth S."/>
            <person name="Huckle E.J."/>
            <person name="Hunt S."/>
            <person name="Jagels K."/>
            <person name="James K.D."/>
            <person name="Jones L."/>
            <person name="Jones M."/>
            <person name="Leather S."/>
            <person name="McDonald S."/>
            <person name="McLean J."/>
            <person name="Mooney P."/>
            <person name="Moule S."/>
            <person name="Mungall K.L."/>
            <person name="Murphy L.D."/>
            <person name="Niblett D."/>
            <person name="Odell C."/>
            <person name="Oliver K."/>
            <person name="O'Neil S."/>
            <person name="Pearson D."/>
            <person name="Quail M.A."/>
            <person name="Rabbinowitsch E."/>
            <person name="Rutherford K.M."/>
            <person name="Rutter S."/>
            <person name="Saunders D."/>
            <person name="Seeger K."/>
            <person name="Sharp S."/>
            <person name="Skelton J."/>
            <person name="Simmonds M.N."/>
            <person name="Squares R."/>
            <person name="Squares S."/>
            <person name="Stevens K."/>
            <person name="Taylor K."/>
            <person name="Taylor R.G."/>
            <person name="Tivey A."/>
            <person name="Walsh S.V."/>
            <person name="Warren T."/>
            <person name="Whitehead S."/>
            <person name="Woodward J.R."/>
            <person name="Volckaert G."/>
            <person name="Aert R."/>
            <person name="Robben J."/>
            <person name="Grymonprez B."/>
            <person name="Weltjens I."/>
            <person name="Vanstreels E."/>
            <person name="Rieger M."/>
            <person name="Schaefer M."/>
            <person name="Mueller-Auer S."/>
            <person name="Gabel C."/>
            <person name="Fuchs M."/>
            <person name="Duesterhoeft A."/>
            <person name="Fritzc C."/>
            <person name="Holzer E."/>
            <person name="Moestl D."/>
            <person name="Hilbert H."/>
            <person name="Borzym K."/>
            <person name="Langer I."/>
            <person name="Beck A."/>
            <person name="Lehrach H."/>
            <person name="Reinhardt R."/>
            <person name="Pohl T.M."/>
            <person name="Eger P."/>
            <person name="Zimmermann W."/>
            <person name="Wedler H."/>
            <person name="Wambutt R."/>
            <person name="Purnelle B."/>
            <person name="Goffeau A."/>
            <person name="Cadieu E."/>
            <person name="Dreano S."/>
            <person name="Gloux S."/>
            <person name="Lelaure V."/>
            <person name="Mottier S."/>
            <person name="Galibert F."/>
            <person name="Aves S.J."/>
            <person name="Xiang Z."/>
            <person name="Hunt C."/>
            <person name="Moore K."/>
            <person name="Hurst S.M."/>
            <person name="Lucas M."/>
            <person name="Rochet M."/>
            <person name="Gaillardin C."/>
            <person name="Tallada V.A."/>
            <person name="Garzon A."/>
            <person name="Thode G."/>
            <person name="Daga R.R."/>
            <person name="Cruzado L."/>
            <person name="Jimenez J."/>
            <person name="Sanchez M."/>
            <person name="del Rey F."/>
            <person name="Benito J."/>
            <person name="Dominguez A."/>
            <person name="Revuelta J.L."/>
            <person name="Moreno S."/>
            <person name="Armstrong J."/>
            <person name="Forsburg S.L."/>
            <person name="Cerutti L."/>
            <person name="Lowe T."/>
            <person name="McCombie W.R."/>
            <person name="Paulsen I."/>
            <person name="Potashkin J."/>
            <person name="Shpakovski G.V."/>
            <person name="Ussery D."/>
            <person name="Barrell B.G."/>
            <person name="Nurse P."/>
        </authorList>
    </citation>
    <scope>NUCLEOTIDE SEQUENCE [LARGE SCALE GENOMIC DNA]</scope>
    <source>
        <strain>972 / ATCC 24843</strain>
    </source>
</reference>
<proteinExistence type="inferred from homology"/>
<evidence type="ECO:0000250" key="1"/>
<evidence type="ECO:0000255" key="2">
    <source>
        <dbReference type="PROSITE-ProRule" id="PRU00547"/>
    </source>
</evidence>
<evidence type="ECO:0000256" key="3">
    <source>
        <dbReference type="SAM" id="MobiDB-lite"/>
    </source>
</evidence>
<evidence type="ECO:0000305" key="4"/>
<organism>
    <name type="scientific">Schizosaccharomyces pombe (strain 972 / ATCC 24843)</name>
    <name type="common">Fission yeast</name>
    <dbReference type="NCBI Taxonomy" id="284812"/>
    <lineage>
        <taxon>Eukaryota</taxon>
        <taxon>Fungi</taxon>
        <taxon>Dikarya</taxon>
        <taxon>Ascomycota</taxon>
        <taxon>Taphrinomycotina</taxon>
        <taxon>Schizosaccharomycetes</taxon>
        <taxon>Schizosaccharomycetales</taxon>
        <taxon>Schizosaccharomycetaceae</taxon>
        <taxon>Schizosaccharomyces</taxon>
    </lineage>
</organism>
<keyword id="KW-0539">Nucleus</keyword>
<keyword id="KW-1185">Reference proteome</keyword>
<name>SHQ1_SCHPO</name>
<protein>
    <recommendedName>
        <fullName>Protein shq1</fullName>
    </recommendedName>
</protein>
<sequence>MITPKFELRQDEEFVYLDVHTPYIKAKNVEIDAFNNEVNFCIAPYFLKLELPGNVLDDDRANASYDISSGFVHIKFPKETPGEVFPDLDLLTTLLVNQNKEPVKKPLIEEVEDTPSPSTSQNASKDEEKEVKIDWQNIHFDDPDFDWGLLQRLDDEKMQYTSTSQYGFNNQYSGLLKYNALVGNEINQIPEPERTPPSTRSEIRVQLEDEKFDAEHYMADFYDREMIDEILHYIPDYIGEFLLVQQGKSDRLLEFTSEEKEALAKLPKRSYLIDNPKNVYLCLVPLIFAYAYDNRTTLGDPTIESCWNIGTLSSTISCLDTNFLAIKDIFIACIRRSLAYPLYRNWDLALTCWKDTHAILSLGKRWILRVLLRIRNLFEHHDVYYIYNAIVLNDYAYWIQTANDNVLAALAYQVSECTITKEETNWPLEEIEANVQETIIASDEESESIEK</sequence>
<feature type="chain" id="PRO_0000302828" description="Protein shq1">
    <location>
        <begin position="1"/>
        <end position="451"/>
    </location>
</feature>
<feature type="domain" description="CS" evidence="2">
    <location>
        <begin position="1"/>
        <end position="89"/>
    </location>
</feature>
<feature type="region of interest" description="Disordered" evidence="3">
    <location>
        <begin position="106"/>
        <end position="128"/>
    </location>
</feature>
<comment type="function">
    <text evidence="1">Involved in the early biogenesis steps of box H/ACA snoRNP assembly.</text>
</comment>
<comment type="subcellular location">
    <subcellularLocation>
        <location evidence="1">Nucleus</location>
    </subcellularLocation>
</comment>
<comment type="similarity">
    <text evidence="4">Belongs to the SHQ1 family.</text>
</comment>
<comment type="sequence caution" evidence="4">
    <conflict type="erroneous gene model prediction">
        <sequence resource="EMBL-CDS" id="BAA21433"/>
    </conflict>
</comment>
<gene>
    <name type="primary">shq1</name>
    <name type="ORF">pi052</name>
    <name type="ORF">SPBC8D2.13</name>
</gene>